<reference key="1">
    <citation type="journal article" date="1995" name="Mol. Microbiol.">
        <title>Molecular analysis of the ams operon required for exopolysaccharide synthesis of Erwinia amylovora.</title>
        <authorList>
            <person name="Bugert P."/>
            <person name="Geider K."/>
        </authorList>
    </citation>
    <scope>NUCLEOTIDE SEQUENCE [GENOMIC DNA]</scope>
    <source>
        <strain>EA1/79</strain>
    </source>
</reference>
<dbReference type="EC" id="3.1.3.48"/>
<dbReference type="EMBL" id="X77921">
    <property type="protein sequence ID" value="CAA54881.1"/>
    <property type="molecule type" value="Genomic_DNA"/>
</dbReference>
<dbReference type="PIR" id="S61893">
    <property type="entry name" value="S52140"/>
</dbReference>
<dbReference type="RefSeq" id="WP_004158327.1">
    <property type="nucleotide sequence ID" value="NZ_RQKG01000006.1"/>
</dbReference>
<dbReference type="PDB" id="4D74">
    <property type="method" value="X-ray"/>
    <property type="resolution" value="1.57 A"/>
    <property type="chains" value="A=1-144"/>
</dbReference>
<dbReference type="PDBsum" id="4D74"/>
<dbReference type="SMR" id="Q46630"/>
<dbReference type="OMA" id="AFFPQKA"/>
<dbReference type="EvolutionaryTrace" id="Q46630"/>
<dbReference type="GO" id="GO:0004725">
    <property type="term" value="F:protein tyrosine phosphatase activity"/>
    <property type="evidence" value="ECO:0007669"/>
    <property type="project" value="UniProtKB-EC"/>
</dbReference>
<dbReference type="GO" id="GO:0000271">
    <property type="term" value="P:polysaccharide biosynthetic process"/>
    <property type="evidence" value="ECO:0007669"/>
    <property type="project" value="UniProtKB-KW"/>
</dbReference>
<dbReference type="CDD" id="cd16343">
    <property type="entry name" value="LMWPTP"/>
    <property type="match status" value="1"/>
</dbReference>
<dbReference type="FunFam" id="3.40.50.2300:FF:000041">
    <property type="entry name" value="Low molecular weight protein-tyrosine-phosphatase"/>
    <property type="match status" value="1"/>
</dbReference>
<dbReference type="Gene3D" id="3.40.50.2300">
    <property type="match status" value="1"/>
</dbReference>
<dbReference type="InterPro" id="IPR050438">
    <property type="entry name" value="LMW_PTPase"/>
</dbReference>
<dbReference type="InterPro" id="IPR023485">
    <property type="entry name" value="Ptyr_pPase"/>
</dbReference>
<dbReference type="InterPro" id="IPR036196">
    <property type="entry name" value="Ptyr_pPase_sf"/>
</dbReference>
<dbReference type="InterPro" id="IPR017867">
    <property type="entry name" value="Tyr_phospatase_low_mol_wt"/>
</dbReference>
<dbReference type="PANTHER" id="PTHR11717">
    <property type="entry name" value="LOW MOLECULAR WEIGHT PROTEIN TYROSINE PHOSPHATASE"/>
    <property type="match status" value="1"/>
</dbReference>
<dbReference type="PANTHER" id="PTHR11717:SF31">
    <property type="entry name" value="LOW MOLECULAR WEIGHT PROTEIN-TYROSINE-PHOSPHATASE ETP-RELATED"/>
    <property type="match status" value="1"/>
</dbReference>
<dbReference type="Pfam" id="PF01451">
    <property type="entry name" value="LMWPc"/>
    <property type="match status" value="1"/>
</dbReference>
<dbReference type="PRINTS" id="PR00719">
    <property type="entry name" value="LMWPTPASE"/>
</dbReference>
<dbReference type="SMART" id="SM00226">
    <property type="entry name" value="LMWPc"/>
    <property type="match status" value="1"/>
</dbReference>
<dbReference type="SUPFAM" id="SSF52788">
    <property type="entry name" value="Phosphotyrosine protein phosphatases I"/>
    <property type="match status" value="1"/>
</dbReference>
<feature type="chain" id="PRO_0000046578" description="Probable low molecular weight protein-tyrosine-phosphatase AmsI">
    <location>
        <begin position="1"/>
        <end position="144"/>
    </location>
</feature>
<feature type="active site" description="Nucleophile" evidence="1">
    <location>
        <position position="9"/>
    </location>
</feature>
<feature type="active site" evidence="1">
    <location>
        <position position="15"/>
    </location>
</feature>
<feature type="active site" description="Proton donor" evidence="1">
    <location>
        <position position="115"/>
    </location>
</feature>
<feature type="strand" evidence="3">
    <location>
        <begin position="4"/>
        <end position="14"/>
    </location>
</feature>
<feature type="helix" evidence="3">
    <location>
        <begin position="15"/>
        <end position="26"/>
    </location>
</feature>
<feature type="strand" evidence="3">
    <location>
        <begin position="30"/>
        <end position="36"/>
    </location>
</feature>
<feature type="helix" evidence="3">
    <location>
        <begin position="47"/>
        <end position="55"/>
    </location>
</feature>
<feature type="helix" evidence="3">
    <location>
        <begin position="70"/>
        <end position="75"/>
    </location>
</feature>
<feature type="strand" evidence="3">
    <location>
        <begin position="77"/>
        <end position="83"/>
    </location>
</feature>
<feature type="helix" evidence="3">
    <location>
        <begin position="85"/>
        <end position="93"/>
    </location>
</feature>
<feature type="helix" evidence="3">
    <location>
        <begin position="95"/>
        <end position="100"/>
    </location>
</feature>
<feature type="strand" evidence="3">
    <location>
        <begin position="101"/>
        <end position="103"/>
    </location>
</feature>
<feature type="helix" evidence="3">
    <location>
        <begin position="121"/>
        <end position="143"/>
    </location>
</feature>
<gene>
    <name type="primary">amsI</name>
</gene>
<proteinExistence type="evidence at protein level"/>
<name>AMSI_ERWAM</name>
<keyword id="KW-0002">3D-structure</keyword>
<keyword id="KW-0270">Exopolysaccharide synthesis</keyword>
<keyword id="KW-0378">Hydrolase</keyword>
<keyword id="KW-0904">Protein phosphatase</keyword>
<keyword id="KW-0843">Virulence</keyword>
<sequence length="144" mass="15772">MINSILVVCIGNICRSPTGERLLKAALPERKIASAGLKAMVGGSADETASIVANEHGVSLQDHVAQQLTADMCRDSDLILVMEKKHIDLVCRINPSVRGKTMLFGHWINQQEIADPYKKSRDAFEAVYGVLENAAQKWVNALSR</sequence>
<evidence type="ECO:0000250" key="1">
    <source>
        <dbReference type="UniProtKB" id="P11064"/>
    </source>
</evidence>
<evidence type="ECO:0000305" key="2"/>
<evidence type="ECO:0007829" key="3">
    <source>
        <dbReference type="PDB" id="4D74"/>
    </source>
</evidence>
<protein>
    <recommendedName>
        <fullName>Probable low molecular weight protein-tyrosine-phosphatase AmsI</fullName>
        <ecNumber>3.1.3.48</ecNumber>
    </recommendedName>
</protein>
<accession>Q46630</accession>
<comment type="function">
    <text>May function as a phosphatase required for amylovoran (an exopolysaccharide that functions as a virulence factor) production.</text>
</comment>
<comment type="catalytic activity">
    <reaction>
        <text>O-phospho-L-tyrosyl-[protein] + H2O = L-tyrosyl-[protein] + phosphate</text>
        <dbReference type="Rhea" id="RHEA:10684"/>
        <dbReference type="Rhea" id="RHEA-COMP:10136"/>
        <dbReference type="Rhea" id="RHEA-COMP:20101"/>
        <dbReference type="ChEBI" id="CHEBI:15377"/>
        <dbReference type="ChEBI" id="CHEBI:43474"/>
        <dbReference type="ChEBI" id="CHEBI:46858"/>
        <dbReference type="ChEBI" id="CHEBI:61978"/>
        <dbReference type="EC" id="3.1.3.48"/>
    </reaction>
</comment>
<comment type="similarity">
    <text evidence="2">Belongs to the low molecular weight phosphotyrosine protein phosphatase family.</text>
</comment>
<organism>
    <name type="scientific">Erwinia amylovora</name>
    <name type="common">Fire blight bacteria</name>
    <dbReference type="NCBI Taxonomy" id="552"/>
    <lineage>
        <taxon>Bacteria</taxon>
        <taxon>Pseudomonadati</taxon>
        <taxon>Pseudomonadota</taxon>
        <taxon>Gammaproteobacteria</taxon>
        <taxon>Enterobacterales</taxon>
        <taxon>Erwiniaceae</taxon>
        <taxon>Erwinia</taxon>
    </lineage>
</organism>